<evidence type="ECO:0000255" key="1">
    <source>
        <dbReference type="HAMAP-Rule" id="MF_00333"/>
    </source>
</evidence>
<protein>
    <recommendedName>
        <fullName evidence="1">Oxygen-dependent coproporphyrinogen-III oxidase</fullName>
        <shortName evidence="1">CPO</shortName>
        <shortName evidence="1">Coprogen oxidase</shortName>
        <shortName evidence="1">Coproporphyrinogenase</shortName>
        <ecNumber evidence="1">1.3.3.3</ecNumber>
    </recommendedName>
</protein>
<organism>
    <name type="scientific">Rickettsia conorii (strain ATCC VR-613 / Malish 7)</name>
    <dbReference type="NCBI Taxonomy" id="272944"/>
    <lineage>
        <taxon>Bacteria</taxon>
        <taxon>Pseudomonadati</taxon>
        <taxon>Pseudomonadota</taxon>
        <taxon>Alphaproteobacteria</taxon>
        <taxon>Rickettsiales</taxon>
        <taxon>Rickettsiaceae</taxon>
        <taxon>Rickettsieae</taxon>
        <taxon>Rickettsia</taxon>
        <taxon>spotted fever group</taxon>
    </lineage>
</organism>
<name>HEM6_RICCN</name>
<dbReference type="EC" id="1.3.3.3" evidence="1"/>
<dbReference type="EMBL" id="AE006914">
    <property type="protein sequence ID" value="AAL03907.1"/>
    <property type="molecule type" value="Genomic_DNA"/>
</dbReference>
<dbReference type="PIR" id="A97871">
    <property type="entry name" value="A97871"/>
</dbReference>
<dbReference type="RefSeq" id="WP_004997036.1">
    <property type="nucleotide sequence ID" value="NC_003103.1"/>
</dbReference>
<dbReference type="SMR" id="Q92FV8"/>
<dbReference type="GeneID" id="95361745"/>
<dbReference type="KEGG" id="rco:RC1369"/>
<dbReference type="HOGENOM" id="CLU_026169_0_1_5"/>
<dbReference type="UniPathway" id="UPA00251">
    <property type="reaction ID" value="UER00322"/>
</dbReference>
<dbReference type="Proteomes" id="UP000000816">
    <property type="component" value="Chromosome"/>
</dbReference>
<dbReference type="GO" id="GO:0005737">
    <property type="term" value="C:cytoplasm"/>
    <property type="evidence" value="ECO:0007669"/>
    <property type="project" value="UniProtKB-SubCell"/>
</dbReference>
<dbReference type="GO" id="GO:0004109">
    <property type="term" value="F:coproporphyrinogen oxidase activity"/>
    <property type="evidence" value="ECO:0007669"/>
    <property type="project" value="UniProtKB-UniRule"/>
</dbReference>
<dbReference type="GO" id="GO:0046872">
    <property type="term" value="F:metal ion binding"/>
    <property type="evidence" value="ECO:0007669"/>
    <property type="project" value="UniProtKB-KW"/>
</dbReference>
<dbReference type="GO" id="GO:0042803">
    <property type="term" value="F:protein homodimerization activity"/>
    <property type="evidence" value="ECO:0000250"/>
    <property type="project" value="UniProtKB"/>
</dbReference>
<dbReference type="GO" id="GO:0006782">
    <property type="term" value="P:protoporphyrinogen IX biosynthetic process"/>
    <property type="evidence" value="ECO:0007669"/>
    <property type="project" value="UniProtKB-UniRule"/>
</dbReference>
<dbReference type="FunFam" id="3.40.1500.10:FF:000005">
    <property type="entry name" value="Oxygen-dependent coproporphyrinogen-III oxidase"/>
    <property type="match status" value="1"/>
</dbReference>
<dbReference type="Gene3D" id="3.40.1500.10">
    <property type="entry name" value="Coproporphyrinogen III oxidase, aerobic"/>
    <property type="match status" value="1"/>
</dbReference>
<dbReference type="HAMAP" id="MF_00333">
    <property type="entry name" value="Coprogen_oxidas"/>
    <property type="match status" value="1"/>
</dbReference>
<dbReference type="InterPro" id="IPR001260">
    <property type="entry name" value="Coprogen_oxidase_aer"/>
</dbReference>
<dbReference type="InterPro" id="IPR036406">
    <property type="entry name" value="Coprogen_oxidase_aer_sf"/>
</dbReference>
<dbReference type="InterPro" id="IPR018375">
    <property type="entry name" value="Coprogen_oxidase_CS"/>
</dbReference>
<dbReference type="NCBIfam" id="NF003727">
    <property type="entry name" value="PRK05330.1"/>
    <property type="match status" value="1"/>
</dbReference>
<dbReference type="PANTHER" id="PTHR10755">
    <property type="entry name" value="COPROPORPHYRINOGEN III OXIDASE, MITOCHONDRIAL"/>
    <property type="match status" value="1"/>
</dbReference>
<dbReference type="PANTHER" id="PTHR10755:SF0">
    <property type="entry name" value="OXYGEN-DEPENDENT COPROPORPHYRINOGEN-III OXIDASE, MITOCHONDRIAL"/>
    <property type="match status" value="1"/>
</dbReference>
<dbReference type="Pfam" id="PF01218">
    <property type="entry name" value="Coprogen_oxidas"/>
    <property type="match status" value="1"/>
</dbReference>
<dbReference type="PIRSF" id="PIRSF000166">
    <property type="entry name" value="Coproporphyri_ox"/>
    <property type="match status" value="1"/>
</dbReference>
<dbReference type="PRINTS" id="PR00073">
    <property type="entry name" value="COPRGNOXDASE"/>
</dbReference>
<dbReference type="SUPFAM" id="SSF102886">
    <property type="entry name" value="Coproporphyrinogen III oxidase"/>
    <property type="match status" value="1"/>
</dbReference>
<dbReference type="PROSITE" id="PS01021">
    <property type="entry name" value="COPROGEN_OXIDASE"/>
    <property type="match status" value="1"/>
</dbReference>
<comment type="function">
    <text evidence="1">Involved in the heme biosynthesis. Catalyzes the aerobic oxidative decarboxylation of propionate groups of rings A and B of coproporphyrinogen-III to yield the vinyl groups in protoporphyrinogen-IX.</text>
</comment>
<comment type="catalytic activity">
    <reaction evidence="1">
        <text>coproporphyrinogen III + O2 + 2 H(+) = protoporphyrinogen IX + 2 CO2 + 2 H2O</text>
        <dbReference type="Rhea" id="RHEA:18257"/>
        <dbReference type="ChEBI" id="CHEBI:15377"/>
        <dbReference type="ChEBI" id="CHEBI:15378"/>
        <dbReference type="ChEBI" id="CHEBI:15379"/>
        <dbReference type="ChEBI" id="CHEBI:16526"/>
        <dbReference type="ChEBI" id="CHEBI:57307"/>
        <dbReference type="ChEBI" id="CHEBI:57309"/>
        <dbReference type="EC" id="1.3.3.3"/>
    </reaction>
</comment>
<comment type="cofactor">
    <cofactor evidence="1">
        <name>a divalent metal cation</name>
        <dbReference type="ChEBI" id="CHEBI:60240"/>
    </cofactor>
</comment>
<comment type="pathway">
    <text evidence="1">Porphyrin-containing compound metabolism; protoporphyrin-IX biosynthesis; protoporphyrinogen-IX from coproporphyrinogen-III (O2 route): step 1/1.</text>
</comment>
<comment type="subunit">
    <text evidence="1">Homodimer.</text>
</comment>
<comment type="subcellular location">
    <subcellularLocation>
        <location evidence="1">Cytoplasm</location>
    </subcellularLocation>
</comment>
<comment type="similarity">
    <text evidence="1">Belongs to the aerobic coproporphyrinogen-III oxidase family.</text>
</comment>
<proteinExistence type="inferred from homology"/>
<accession>Q92FV8</accession>
<sequence length="279" mass="31983">MNIENKEITSSWFTNLRDLLCKEFEKIEEEYAQTKGLKPAKFVRSSWQRNGGGGGVMSLMKGAVFEKVGVNISTVFGKISPEFRNEIPGAELDGKFFATGISLVAHLKSPLIPAMHFNTRYIETSKSWFGGGGDLTPFYPEKNETVKFHAAFKEACDKYDSSYYPKFKKQCDEYFYLKHRKEPRGVGGIFYDYLNNGNFEQDFAFTQDVGKALLSVYPEIVRSKLFLPWTAEQKEYQLIRRGRYVEFNLLYDRGTKFGLMTDGNVEAILMSLPPEVKFN</sequence>
<feature type="chain" id="PRO_0000109915" description="Oxygen-dependent coproporphyrinogen-III oxidase">
    <location>
        <begin position="1"/>
        <end position="279"/>
    </location>
</feature>
<feature type="region of interest" description="Important for dimerization" evidence="1">
    <location>
        <begin position="244"/>
        <end position="279"/>
    </location>
</feature>
<feature type="active site" description="Proton donor" evidence="1">
    <location>
        <position position="116"/>
    </location>
</feature>
<feature type="binding site" evidence="1">
    <location>
        <position position="102"/>
    </location>
    <ligand>
        <name>substrate</name>
    </ligand>
</feature>
<feature type="binding site" evidence="1">
    <location>
        <position position="106"/>
    </location>
    <ligand>
        <name>a divalent metal cation</name>
        <dbReference type="ChEBI" id="CHEBI:60240"/>
    </ligand>
</feature>
<feature type="binding site" evidence="1">
    <location>
        <position position="116"/>
    </location>
    <ligand>
        <name>a divalent metal cation</name>
        <dbReference type="ChEBI" id="CHEBI:60240"/>
    </ligand>
</feature>
<feature type="binding site" evidence="1">
    <location>
        <begin position="118"/>
        <end position="120"/>
    </location>
    <ligand>
        <name>substrate</name>
    </ligand>
</feature>
<feature type="binding site" evidence="1">
    <location>
        <position position="149"/>
    </location>
    <ligand>
        <name>a divalent metal cation</name>
        <dbReference type="ChEBI" id="CHEBI:60240"/>
    </ligand>
</feature>
<feature type="binding site" evidence="1">
    <location>
        <position position="179"/>
    </location>
    <ligand>
        <name>a divalent metal cation</name>
        <dbReference type="ChEBI" id="CHEBI:60240"/>
    </ligand>
</feature>
<feature type="site" description="Important for dimerization" evidence="1">
    <location>
        <position position="179"/>
    </location>
</feature>
<reference key="1">
    <citation type="journal article" date="2001" name="Science">
        <title>Mechanisms of evolution in Rickettsia conorii and R. prowazekii.</title>
        <authorList>
            <person name="Ogata H."/>
            <person name="Audic S."/>
            <person name="Renesto-Audiffren P."/>
            <person name="Fournier P.-E."/>
            <person name="Barbe V."/>
            <person name="Samson D."/>
            <person name="Roux V."/>
            <person name="Cossart P."/>
            <person name="Weissenbach J."/>
            <person name="Claverie J.-M."/>
            <person name="Raoult D."/>
        </authorList>
    </citation>
    <scope>NUCLEOTIDE SEQUENCE [LARGE SCALE GENOMIC DNA]</scope>
    <source>
        <strain>ATCC VR-613 / Malish 7</strain>
    </source>
</reference>
<gene>
    <name evidence="1" type="primary">hemF</name>
    <name type="ordered locus">RC1369</name>
</gene>
<keyword id="KW-0963">Cytoplasm</keyword>
<keyword id="KW-0350">Heme biosynthesis</keyword>
<keyword id="KW-0479">Metal-binding</keyword>
<keyword id="KW-0560">Oxidoreductase</keyword>
<keyword id="KW-0627">Porphyrin biosynthesis</keyword>